<dbReference type="EMBL" id="CU928145">
    <property type="protein sequence ID" value="CAV01067.1"/>
    <property type="molecule type" value="Genomic_DNA"/>
</dbReference>
<dbReference type="RefSeq" id="WP_000027708.1">
    <property type="nucleotide sequence ID" value="NC_011748.1"/>
</dbReference>
<dbReference type="SMR" id="B7L9E7"/>
<dbReference type="GeneID" id="93778047"/>
<dbReference type="KEGG" id="eck:EC55989_4368"/>
<dbReference type="HOGENOM" id="CLU_055275_0_0_6"/>
<dbReference type="Proteomes" id="UP000000746">
    <property type="component" value="Chromosome"/>
</dbReference>
<dbReference type="GO" id="GO:0005829">
    <property type="term" value="C:cytosol"/>
    <property type="evidence" value="ECO:0007669"/>
    <property type="project" value="TreeGrafter"/>
</dbReference>
<dbReference type="GO" id="GO:0008199">
    <property type="term" value="F:ferric iron binding"/>
    <property type="evidence" value="ECO:0007669"/>
    <property type="project" value="TreeGrafter"/>
</dbReference>
<dbReference type="GO" id="GO:0051604">
    <property type="term" value="P:protein maturation"/>
    <property type="evidence" value="ECO:0007669"/>
    <property type="project" value="TreeGrafter"/>
</dbReference>
<dbReference type="CDD" id="cd16341">
    <property type="entry name" value="FdhE"/>
    <property type="match status" value="1"/>
</dbReference>
<dbReference type="FunFam" id="3.90.1670.10:FF:000001">
    <property type="entry name" value="Protein FdhE"/>
    <property type="match status" value="1"/>
</dbReference>
<dbReference type="Gene3D" id="3.90.1670.10">
    <property type="entry name" value="FdhE-like domain"/>
    <property type="match status" value="1"/>
</dbReference>
<dbReference type="HAMAP" id="MF_00611">
    <property type="entry name" value="FdeH"/>
    <property type="match status" value="1"/>
</dbReference>
<dbReference type="InterPro" id="IPR024064">
    <property type="entry name" value="FdhE-like_sf"/>
</dbReference>
<dbReference type="InterPro" id="IPR056796">
    <property type="entry name" value="FdhE_C"/>
</dbReference>
<dbReference type="InterPro" id="IPR056797">
    <property type="entry name" value="FdhE_central"/>
</dbReference>
<dbReference type="InterPro" id="IPR056774">
    <property type="entry name" value="FdhE_N"/>
</dbReference>
<dbReference type="InterPro" id="IPR006452">
    <property type="entry name" value="Formate_DH_accessory"/>
</dbReference>
<dbReference type="NCBIfam" id="TIGR01562">
    <property type="entry name" value="FdhE"/>
    <property type="match status" value="1"/>
</dbReference>
<dbReference type="NCBIfam" id="NF002925">
    <property type="entry name" value="PRK03564.1"/>
    <property type="match status" value="1"/>
</dbReference>
<dbReference type="PANTHER" id="PTHR37689">
    <property type="entry name" value="PROTEIN FDHE"/>
    <property type="match status" value="1"/>
</dbReference>
<dbReference type="PANTHER" id="PTHR37689:SF1">
    <property type="entry name" value="PROTEIN FDHE"/>
    <property type="match status" value="1"/>
</dbReference>
<dbReference type="Pfam" id="PF24860">
    <property type="entry name" value="FdhE_C"/>
    <property type="match status" value="1"/>
</dbReference>
<dbReference type="Pfam" id="PF24859">
    <property type="entry name" value="FdhE_central"/>
    <property type="match status" value="1"/>
</dbReference>
<dbReference type="Pfam" id="PF04216">
    <property type="entry name" value="FdhE_N"/>
    <property type="match status" value="1"/>
</dbReference>
<dbReference type="PIRSF" id="PIRSF018296">
    <property type="entry name" value="Format_dh_formtn"/>
    <property type="match status" value="1"/>
</dbReference>
<dbReference type="SUPFAM" id="SSF144020">
    <property type="entry name" value="FdhE-like"/>
    <property type="match status" value="1"/>
</dbReference>
<feature type="chain" id="PRO_1000147168" description="Protein FdhE">
    <location>
        <begin position="1"/>
        <end position="309"/>
    </location>
</feature>
<organism>
    <name type="scientific">Escherichia coli (strain 55989 / EAEC)</name>
    <dbReference type="NCBI Taxonomy" id="585055"/>
    <lineage>
        <taxon>Bacteria</taxon>
        <taxon>Pseudomonadati</taxon>
        <taxon>Pseudomonadota</taxon>
        <taxon>Gammaproteobacteria</taxon>
        <taxon>Enterobacterales</taxon>
        <taxon>Enterobacteriaceae</taxon>
        <taxon>Escherichia</taxon>
    </lineage>
</organism>
<reference key="1">
    <citation type="journal article" date="2009" name="PLoS Genet.">
        <title>Organised genome dynamics in the Escherichia coli species results in highly diverse adaptive paths.</title>
        <authorList>
            <person name="Touchon M."/>
            <person name="Hoede C."/>
            <person name="Tenaillon O."/>
            <person name="Barbe V."/>
            <person name="Baeriswyl S."/>
            <person name="Bidet P."/>
            <person name="Bingen E."/>
            <person name="Bonacorsi S."/>
            <person name="Bouchier C."/>
            <person name="Bouvet O."/>
            <person name="Calteau A."/>
            <person name="Chiapello H."/>
            <person name="Clermont O."/>
            <person name="Cruveiller S."/>
            <person name="Danchin A."/>
            <person name="Diard M."/>
            <person name="Dossat C."/>
            <person name="Karoui M.E."/>
            <person name="Frapy E."/>
            <person name="Garry L."/>
            <person name="Ghigo J.M."/>
            <person name="Gilles A.M."/>
            <person name="Johnson J."/>
            <person name="Le Bouguenec C."/>
            <person name="Lescat M."/>
            <person name="Mangenot S."/>
            <person name="Martinez-Jehanne V."/>
            <person name="Matic I."/>
            <person name="Nassif X."/>
            <person name="Oztas S."/>
            <person name="Petit M.A."/>
            <person name="Pichon C."/>
            <person name="Rouy Z."/>
            <person name="Ruf C.S."/>
            <person name="Schneider D."/>
            <person name="Tourret J."/>
            <person name="Vacherie B."/>
            <person name="Vallenet D."/>
            <person name="Medigue C."/>
            <person name="Rocha E.P.C."/>
            <person name="Denamur E."/>
        </authorList>
    </citation>
    <scope>NUCLEOTIDE SEQUENCE [LARGE SCALE GENOMIC DNA]</scope>
    <source>
        <strain>55989 / EAEC</strain>
    </source>
</reference>
<comment type="function">
    <text evidence="1">Necessary for formate dehydrogenase activity.</text>
</comment>
<comment type="subcellular location">
    <subcellularLocation>
        <location evidence="1">Cytoplasm</location>
    </subcellularLocation>
</comment>
<comment type="similarity">
    <text evidence="1">Belongs to the FdhE family.</text>
</comment>
<sequence length="309" mass="34689">MSIRIIPQDELGSSEKRTADMIPPLLFPRLKNLYNRRAERLRELAENNPLGDYLRFAALIAHAQEVVLYDHPLEMDLTARIKEASAQGKPPLDIHVLPRDKHWQKLLMALIAELKPEMSGPALAVIENLEKASTQELEDMASALFASDFSSVSSDKAPFIWAALSLYWAQMANLIPGKARAEYGEQRQYCPVCGSMPVSSMVQIGTTQGLRYLHCNLCETEWHVVRVKCSNCEQSGKLHYWSLDDEQAAIKAESCDDCGTYLKILYQEKEPKVEAVADDLASLVLDARMEQEGYARSSINPFLFPGEGE</sequence>
<gene>
    <name evidence="1" type="primary">fdhE</name>
    <name type="ordered locus">EC55989_4368</name>
</gene>
<protein>
    <recommendedName>
        <fullName evidence="1">Protein FdhE</fullName>
    </recommendedName>
</protein>
<proteinExistence type="inferred from homology"/>
<accession>B7L9E7</accession>
<name>FDHE_ECO55</name>
<keyword id="KW-0963">Cytoplasm</keyword>
<keyword id="KW-1185">Reference proteome</keyword>
<evidence type="ECO:0000255" key="1">
    <source>
        <dbReference type="HAMAP-Rule" id="MF_00611"/>
    </source>
</evidence>